<reference key="1">
    <citation type="journal article" date="2006" name="Proc. Natl. Acad. Sci. U.S.A.">
        <title>The complete genome sequence of Lactobacillus bulgaricus reveals extensive and ongoing reductive evolution.</title>
        <authorList>
            <person name="van de Guchte M."/>
            <person name="Penaud S."/>
            <person name="Grimaldi C."/>
            <person name="Barbe V."/>
            <person name="Bryson K."/>
            <person name="Nicolas P."/>
            <person name="Robert C."/>
            <person name="Oztas S."/>
            <person name="Mangenot S."/>
            <person name="Couloux A."/>
            <person name="Loux V."/>
            <person name="Dervyn R."/>
            <person name="Bossy R."/>
            <person name="Bolotin A."/>
            <person name="Batto J.-M."/>
            <person name="Walunas T."/>
            <person name="Gibrat J.-F."/>
            <person name="Bessieres P."/>
            <person name="Weissenbach J."/>
            <person name="Ehrlich S.D."/>
            <person name="Maguin E."/>
        </authorList>
    </citation>
    <scope>NUCLEOTIDE SEQUENCE [LARGE SCALE GENOMIC DNA]</scope>
    <source>
        <strain>ATCC 11842 / DSM 20081 / BCRC 10696 / JCM 1002 / NBRC 13953 / NCIMB 11778 / NCTC 12712 / WDCM 00102 / Lb 14</strain>
    </source>
</reference>
<proteinExistence type="inferred from homology"/>
<sequence>MKKGIHPDYQEVCFMDAATGFKFVAGSTLKSSETVEFEGNTYPLIRVEISSDSHPFYTGKQKFAAADGRIERFNKKYGFNKKN</sequence>
<organism>
    <name type="scientific">Lactobacillus delbrueckii subsp. bulgaricus (strain ATCC 11842 / DSM 20081 / BCRC 10696 / JCM 1002 / NBRC 13953 / NCIMB 11778 / NCTC 12712 / WDCM 00102 / Lb 14)</name>
    <dbReference type="NCBI Taxonomy" id="390333"/>
    <lineage>
        <taxon>Bacteria</taxon>
        <taxon>Bacillati</taxon>
        <taxon>Bacillota</taxon>
        <taxon>Bacilli</taxon>
        <taxon>Lactobacillales</taxon>
        <taxon>Lactobacillaceae</taxon>
        <taxon>Lactobacillus</taxon>
    </lineage>
</organism>
<feature type="chain" id="PRO_0000259111" description="Large ribosomal subunit protein bL31B">
    <location>
        <begin position="1"/>
        <end position="83"/>
    </location>
</feature>
<gene>
    <name evidence="2" type="primary">rpmE2</name>
    <name type="ordered locus">Ldb0356</name>
</gene>
<comment type="function">
    <text evidence="1">Binds the 23S rRNA.</text>
</comment>
<comment type="subunit">
    <text evidence="2">Part of the 50S ribosomal subunit.</text>
</comment>
<comment type="similarity">
    <text evidence="2">Belongs to the bacterial ribosomal protein bL31 family. Type B subfamily.</text>
</comment>
<dbReference type="EMBL" id="CR954253">
    <property type="protein sequence ID" value="CAI97194.1"/>
    <property type="molecule type" value="Genomic_DNA"/>
</dbReference>
<dbReference type="RefSeq" id="WP_003620766.1">
    <property type="nucleotide sequence ID" value="NZ_JQAV01000001.1"/>
</dbReference>
<dbReference type="SMR" id="Q1GBQ0"/>
<dbReference type="STRING" id="390333.Ldb0356"/>
<dbReference type="KEGG" id="ldb:Ldb0356"/>
<dbReference type="PATRIC" id="fig|390333.13.peg.432"/>
<dbReference type="eggNOG" id="COG0254">
    <property type="taxonomic scope" value="Bacteria"/>
</dbReference>
<dbReference type="HOGENOM" id="CLU_114306_2_1_9"/>
<dbReference type="BioCyc" id="LDEL390333:LDB_RS01495-MONOMER"/>
<dbReference type="Proteomes" id="UP000001259">
    <property type="component" value="Chromosome"/>
</dbReference>
<dbReference type="GO" id="GO:1990904">
    <property type="term" value="C:ribonucleoprotein complex"/>
    <property type="evidence" value="ECO:0007669"/>
    <property type="project" value="UniProtKB-KW"/>
</dbReference>
<dbReference type="GO" id="GO:0005840">
    <property type="term" value="C:ribosome"/>
    <property type="evidence" value="ECO:0007669"/>
    <property type="project" value="UniProtKB-KW"/>
</dbReference>
<dbReference type="GO" id="GO:0003735">
    <property type="term" value="F:structural constituent of ribosome"/>
    <property type="evidence" value="ECO:0007669"/>
    <property type="project" value="InterPro"/>
</dbReference>
<dbReference type="GO" id="GO:0006412">
    <property type="term" value="P:translation"/>
    <property type="evidence" value="ECO:0007669"/>
    <property type="project" value="UniProtKB-UniRule"/>
</dbReference>
<dbReference type="Gene3D" id="4.10.830.30">
    <property type="entry name" value="Ribosomal protein L31"/>
    <property type="match status" value="1"/>
</dbReference>
<dbReference type="HAMAP" id="MF_00502">
    <property type="entry name" value="Ribosomal_bL31_2"/>
    <property type="match status" value="1"/>
</dbReference>
<dbReference type="InterPro" id="IPR034704">
    <property type="entry name" value="Ribosomal_bL28/bL31-like_sf"/>
</dbReference>
<dbReference type="InterPro" id="IPR002150">
    <property type="entry name" value="Ribosomal_bL31"/>
</dbReference>
<dbReference type="InterPro" id="IPR027493">
    <property type="entry name" value="Ribosomal_bL31_B"/>
</dbReference>
<dbReference type="InterPro" id="IPR042105">
    <property type="entry name" value="Ribosomal_bL31_sf"/>
</dbReference>
<dbReference type="NCBIfam" id="TIGR00105">
    <property type="entry name" value="L31"/>
    <property type="match status" value="1"/>
</dbReference>
<dbReference type="NCBIfam" id="NF002462">
    <property type="entry name" value="PRK01678.1"/>
    <property type="match status" value="1"/>
</dbReference>
<dbReference type="PANTHER" id="PTHR33280">
    <property type="entry name" value="50S RIBOSOMAL PROTEIN L31, CHLOROPLASTIC"/>
    <property type="match status" value="1"/>
</dbReference>
<dbReference type="PANTHER" id="PTHR33280:SF1">
    <property type="entry name" value="LARGE RIBOSOMAL SUBUNIT PROTEIN BL31C"/>
    <property type="match status" value="1"/>
</dbReference>
<dbReference type="Pfam" id="PF01197">
    <property type="entry name" value="Ribosomal_L31"/>
    <property type="match status" value="1"/>
</dbReference>
<dbReference type="PRINTS" id="PR01249">
    <property type="entry name" value="RIBOSOMALL31"/>
</dbReference>
<dbReference type="SUPFAM" id="SSF143800">
    <property type="entry name" value="L28p-like"/>
    <property type="match status" value="1"/>
</dbReference>
<dbReference type="PROSITE" id="PS01143">
    <property type="entry name" value="RIBOSOMAL_L31"/>
    <property type="match status" value="1"/>
</dbReference>
<evidence type="ECO:0000250" key="1"/>
<evidence type="ECO:0000255" key="2">
    <source>
        <dbReference type="HAMAP-Rule" id="MF_00502"/>
    </source>
</evidence>
<evidence type="ECO:0000305" key="3"/>
<keyword id="KW-1185">Reference proteome</keyword>
<keyword id="KW-0687">Ribonucleoprotein</keyword>
<keyword id="KW-0689">Ribosomal protein</keyword>
<accession>Q1GBQ0</accession>
<protein>
    <recommendedName>
        <fullName evidence="2">Large ribosomal subunit protein bL31B</fullName>
    </recommendedName>
    <alternativeName>
        <fullName evidence="3">50S ribosomal protein L31 type B</fullName>
    </alternativeName>
</protein>
<name>RL31B_LACDA</name>